<dbReference type="EMBL" id="M19420">
    <property type="protein sequence ID" value="AAA87604.1"/>
    <property type="molecule type" value="Genomic_RNA"/>
</dbReference>
<dbReference type="GO" id="GO:0039657">
    <property type="term" value="P:symbiont-mediated suppression of host gene expression"/>
    <property type="evidence" value="ECO:0007669"/>
    <property type="project" value="UniProtKB-KW"/>
</dbReference>
<dbReference type="GO" id="GO:0016032">
    <property type="term" value="P:viral process"/>
    <property type="evidence" value="ECO:0007669"/>
    <property type="project" value="InterPro"/>
</dbReference>
<dbReference type="InterPro" id="IPR000797">
    <property type="entry name" value="Bunya_NSs"/>
</dbReference>
<dbReference type="Pfam" id="PF01104">
    <property type="entry name" value="Bunya_NS-S"/>
    <property type="match status" value="1"/>
</dbReference>
<dbReference type="PIRSF" id="PIRSF003954">
    <property type="entry name" value="NS-S_OrthobunV"/>
    <property type="match status" value="1"/>
</dbReference>
<evidence type="ECO:0000250" key="1"/>
<evidence type="ECO:0000305" key="2"/>
<accession>P16992</accession>
<keyword id="KW-0024">Alternative initiation</keyword>
<keyword id="KW-1262">Eukaryotic host gene expression shutoff by virus</keyword>
<keyword id="KW-1191">Eukaryotic host transcription shutoff by virus</keyword>
<keyword id="KW-1190">Host gene expression shutoff by virus</keyword>
<keyword id="KW-0945">Host-virus interaction</keyword>
<keyword id="KW-1111">Inhibition of eukaryotic host transcription initiation by virus</keyword>
<gene>
    <name type="primary">N</name>
</gene>
<organismHost>
    <name type="scientific">Culex</name>
    <dbReference type="NCBI Taxonomy" id="53527"/>
</organismHost>
<reference key="1">
    <citation type="journal article" date="1987" name="Virus Res.">
        <title>The S segment of the Germiston virus RNA genome can code for three proteins.</title>
        <authorList>
            <person name="Gerbaud S."/>
            <person name="Vialat P."/>
            <person name="Pardigon N."/>
            <person name="Wychowski C."/>
            <person name="Girard M."/>
            <person name="Bouloy M."/>
        </authorList>
    </citation>
    <scope>NUCLEOTIDE SEQUENCE [GENOMIC RNA]</scope>
</reference>
<proteinExistence type="inferred from homology"/>
<sequence length="109" mass="11891">MSLITSGVLLTQSQDTLTFSVTTCQGLRLTKFASSTLKDARLKIVSQKEVNGKLRLTLGAGRYLYSIRISLETGTMQCLTTVLPSTVSVDTLPGTYLESTLQRQNQKSS</sequence>
<name>NSS_BUNGE</name>
<protein>
    <recommendedName>
        <fullName>Non-structural protein NS-S</fullName>
    </recommendedName>
</protein>
<feature type="chain" id="PRO_0000221972" description="Non-structural protein NS-S">
    <location>
        <begin position="1"/>
        <end position="109"/>
    </location>
</feature>
<comment type="function">
    <text evidence="1">Inhibits host transcriptional machinery, by producing modifications to the phosphorylation state of the C-terminal domain (CTD) of RNA polymerase II. Inhibits phosphorylation at serine 2 in the heptapeptide repeat (YSPTSPS) of the CTD of RNA polymerase II, suggesting that the elongation step of transcription and/or 3'-end processing is prevented. Inhibition of host transcription machinery leads to shut off of host cell protein synthesis and inhibition of the host innate immune response. NSs also seems to be involved in the nuclear relocalization of host PABP1 (By similarity).</text>
</comment>
<comment type="alternative products">
    <event type="alternative initiation"/>
    <isoform>
        <id>P16992-1</id>
        <name>NSS</name>
        <sequence type="displayed"/>
    </isoform>
    <isoform>
        <id>P16993-1</id>
        <name>N</name>
        <sequence type="external"/>
    </isoform>
</comment>
<comment type="miscellaneous">
    <molecule>Isoform NSS</molecule>
    <text>Produced by alternative initiation in the N gene, but encoded on another frame.</text>
</comment>
<comment type="similarity">
    <text evidence="2">Belongs to the orthobunyavirus NS-S protein family.</text>
</comment>
<organism>
    <name type="scientific">Bunyavirus germiston</name>
    <dbReference type="NCBI Taxonomy" id="11574"/>
    <lineage>
        <taxon>Viruses</taxon>
        <taxon>Riboviria</taxon>
        <taxon>Orthornavirae</taxon>
        <taxon>Negarnaviricota</taxon>
        <taxon>Polyploviricotina</taxon>
        <taxon>Ellioviricetes</taxon>
        <taxon>Bunyavirales</taxon>
        <taxon>Peribunyaviridae</taxon>
        <taxon>Orthobunyavirus</taxon>
        <taxon>Orthobunyavirus bunyamweraense</taxon>
    </lineage>
</organism>